<accession>P15137</accession>
<keyword id="KW-0244">Early protein</keyword>
<keyword id="KW-0325">Glycoprotein</keyword>
<organismHost>
    <name type="scientific">Homo sapiens</name>
    <name type="common">Human</name>
    <dbReference type="NCBI Taxonomy" id="9606"/>
</organismHost>
<name>E320_ADE35</name>
<feature type="chain" id="PRO_0000221755" description="Early E3 20.3 kDa glycoprotein">
    <location>
        <begin position="1"/>
        <end position="181"/>
    </location>
</feature>
<feature type="glycosylation site" description="N-linked (GlcNAc...) asparagine; by host" evidence="1">
    <location>
        <position position="29"/>
    </location>
</feature>
<feature type="glycosylation site" description="N-linked (GlcNAc...) asparagine; by host" evidence="1">
    <location>
        <position position="57"/>
    </location>
</feature>
<feature type="glycosylation site" description="N-linked (GlcNAc...) asparagine; by host" evidence="1">
    <location>
        <position position="70"/>
    </location>
</feature>
<feature type="glycosylation site" description="N-linked (GlcNAc...) asparagine; by host" evidence="1">
    <location>
        <position position="75"/>
    </location>
</feature>
<comment type="function">
    <text>E3 proteins seem to be dispensable for virus growth in tissue culture cells. They are potentially important for virus growth under special conditions; E3 region may help adenoviruses to evade the immune surveillance of the host.</text>
</comment>
<comment type="similarity">
    <text evidence="2">Belongs to the adenoviridae E3_20 family.</text>
</comment>
<organism>
    <name type="scientific">Human adenovirus B serotype 35</name>
    <name type="common">HAdV-35</name>
    <name type="synonym">Human adenovirus 35</name>
    <dbReference type="NCBI Taxonomy" id="10522"/>
    <lineage>
        <taxon>Viruses</taxon>
        <taxon>Varidnaviria</taxon>
        <taxon>Bamfordvirae</taxon>
        <taxon>Preplasmiviricota</taxon>
        <taxon>Tectiliviricetes</taxon>
        <taxon>Rowavirales</taxon>
        <taxon>Adenoviridae</taxon>
        <taxon>Mastadenovirus</taxon>
        <taxon>Human mastadenovirus B</taxon>
    </lineage>
</organism>
<reference key="1">
    <citation type="journal article" date="1988" name="J. Virol.">
        <title>Sequence and genetic organization of adenovirus type 35 early region 3.</title>
        <authorList>
            <person name="Flomenberg P.R."/>
            <person name="Chen M."/>
            <person name="Horwitz M.S."/>
        </authorList>
    </citation>
    <scope>NUCLEOTIDE SEQUENCE [GENOMIC DNA]</scope>
    <source>
        <strain>Holden</strain>
    </source>
</reference>
<reference key="2">
    <citation type="journal article" date="1996" name="Gene">
        <title>Sequence of the immunoregulatory early region 3 and flanking sequences of adenovirus type 35.</title>
        <authorList>
            <person name="Basler C.F."/>
            <person name="Droguett G."/>
            <person name="Horwitz M.S."/>
        </authorList>
    </citation>
    <scope>NUCLEOTIDE SEQUENCE [GENOMIC DNA]</scope>
    <source>
        <strain>Holden</strain>
    </source>
</reference>
<evidence type="ECO:0000255" key="1"/>
<evidence type="ECO:0000305" key="2"/>
<sequence>MASLTSLIFVSIVTAAHGQTVVSIPLGHNYTLIGPPITSEVIWTKLGSVDYFDIICNKTKPIIVTCNIQNLTLINVSKVYSGYYYGYDRYSSQYRNYLVRVTQLKTTKMPNMAKIRSDDNSLETFTSPTTPDEKNIPDSMIAIVAAVAVVMALIIICMLLYACRYKKFHPKKQDLLLRLNI</sequence>
<proteinExistence type="inferred from homology"/>
<dbReference type="EMBL" id="M23195">
    <property type="protein sequence ID" value="AAA42437.1"/>
    <property type="molecule type" value="Genomic_DNA"/>
</dbReference>
<dbReference type="EMBL" id="U32664">
    <property type="protein sequence ID" value="AAA75326.1"/>
    <property type="molecule type" value="Genomic_DNA"/>
</dbReference>
<dbReference type="PIR" id="C31162">
    <property type="entry name" value="ERAD23"/>
</dbReference>
<dbReference type="RefSeq" id="AP_000595.1">
    <property type="nucleotide sequence ID" value="AC_000019.1"/>
</dbReference>
<dbReference type="SMR" id="P15137"/>
<dbReference type="InterPro" id="IPR003471">
    <property type="entry name" value="Adeno_E3_CR1"/>
</dbReference>
<dbReference type="InterPro" id="IPR003470">
    <property type="entry name" value="Adeno_E3_CR2"/>
</dbReference>
<dbReference type="Pfam" id="PF02440">
    <property type="entry name" value="Adeno_E3_CR1"/>
    <property type="match status" value="1"/>
</dbReference>
<dbReference type="Pfam" id="PF02439">
    <property type="entry name" value="Adeno_E3_CR2"/>
    <property type="match status" value="1"/>
</dbReference>
<protein>
    <recommendedName>
        <fullName>Early E3 20.3 kDa glycoprotein</fullName>
    </recommendedName>
</protein>